<proteinExistence type="inferred from homology"/>
<gene>
    <name type="primary">ybdK</name>
    <name type="ordered locus">SARI_02353</name>
</gene>
<accession>A9ML47</accession>
<feature type="chain" id="PRO_1000088039" description="Putative glutamate--cysteine ligase 2">
    <location>
        <begin position="1"/>
        <end position="372"/>
    </location>
</feature>
<organism>
    <name type="scientific">Salmonella arizonae (strain ATCC BAA-731 / CDC346-86 / RSK2980)</name>
    <dbReference type="NCBI Taxonomy" id="41514"/>
    <lineage>
        <taxon>Bacteria</taxon>
        <taxon>Pseudomonadati</taxon>
        <taxon>Pseudomonadota</taxon>
        <taxon>Gammaproteobacteria</taxon>
        <taxon>Enterobacterales</taxon>
        <taxon>Enterobacteriaceae</taxon>
        <taxon>Salmonella</taxon>
    </lineage>
</organism>
<keyword id="KW-0067">ATP-binding</keyword>
<keyword id="KW-0436">Ligase</keyword>
<keyword id="KW-0547">Nucleotide-binding</keyword>
<keyword id="KW-1185">Reference proteome</keyword>
<comment type="function">
    <text evidence="1">ATP-dependent carboxylate-amine ligase which exhibits weak glutamate--cysteine ligase activity.</text>
</comment>
<comment type="catalytic activity">
    <reaction evidence="1">
        <text>L-cysteine + L-glutamate + ATP = gamma-L-glutamyl-L-cysteine + ADP + phosphate + H(+)</text>
        <dbReference type="Rhea" id="RHEA:13285"/>
        <dbReference type="ChEBI" id="CHEBI:15378"/>
        <dbReference type="ChEBI" id="CHEBI:29985"/>
        <dbReference type="ChEBI" id="CHEBI:30616"/>
        <dbReference type="ChEBI" id="CHEBI:35235"/>
        <dbReference type="ChEBI" id="CHEBI:43474"/>
        <dbReference type="ChEBI" id="CHEBI:58173"/>
        <dbReference type="ChEBI" id="CHEBI:456216"/>
        <dbReference type="EC" id="6.3.2.2"/>
    </reaction>
</comment>
<comment type="subunit">
    <text evidence="1">Homodimer.</text>
</comment>
<comment type="similarity">
    <text evidence="1">Belongs to the glutamate--cysteine ligase type 2 family. YbdK subfamily.</text>
</comment>
<evidence type="ECO:0000255" key="1">
    <source>
        <dbReference type="HAMAP-Rule" id="MF_01609"/>
    </source>
</evidence>
<sequence>MPLNDFHVSEPYTLGIELEMQVINPPGYDLSQDSSTLIDAVKPQLTAGEIKHDITESMLEMATGVCRDIDQVAAQLSAMQHVILQAASEHHLGICGGGTHPFQKWQRQEVCDNERYQRTLENFGYLIQQATVFGQHVHVGCANGDDAIYLLHGLSHFVPHFIALSAASPYMQGSDTRFACARLNIFSAFPDNGPMPWVSNWQEFAGLFRRLSYTAMIDSIKDLHWDIRPSPDFGTVEVRVMDTPLTLDQAINMAGLIQATAHWLLTERPFKPQEQDYLLYKFNRFQACRYGLEGMLTDVYTGDRRRLADDTLRLLDNVTPSARKVGADSAIDALRLQVKKGGNEAQYMREFIADGGSLIGLVQKHCEIWAGQ</sequence>
<reference key="1">
    <citation type="submission" date="2007-11" db="EMBL/GenBank/DDBJ databases">
        <authorList>
            <consortium name="The Salmonella enterica serovar Arizonae Genome Sequencing Project"/>
            <person name="McClelland M."/>
            <person name="Sanderson E.K."/>
            <person name="Porwollik S."/>
            <person name="Spieth J."/>
            <person name="Clifton W.S."/>
            <person name="Fulton R."/>
            <person name="Chunyan W."/>
            <person name="Wollam A."/>
            <person name="Shah N."/>
            <person name="Pepin K."/>
            <person name="Bhonagiri V."/>
            <person name="Nash W."/>
            <person name="Johnson M."/>
            <person name="Thiruvilangam P."/>
            <person name="Wilson R."/>
        </authorList>
    </citation>
    <scope>NUCLEOTIDE SEQUENCE [LARGE SCALE GENOMIC DNA]</scope>
    <source>
        <strain>ATCC BAA-731 / CDC346-86 / RSK2980</strain>
    </source>
</reference>
<name>GCS2_SALAR</name>
<dbReference type="EC" id="6.3.2.2" evidence="1"/>
<dbReference type="EMBL" id="CP000880">
    <property type="protein sequence ID" value="ABX22216.1"/>
    <property type="molecule type" value="Genomic_DNA"/>
</dbReference>
<dbReference type="SMR" id="A9ML47"/>
<dbReference type="STRING" id="41514.SARI_02353"/>
<dbReference type="KEGG" id="ses:SARI_02353"/>
<dbReference type="HOGENOM" id="CLU_044848_1_1_6"/>
<dbReference type="Proteomes" id="UP000002084">
    <property type="component" value="Chromosome"/>
</dbReference>
<dbReference type="GO" id="GO:0005524">
    <property type="term" value="F:ATP binding"/>
    <property type="evidence" value="ECO:0007669"/>
    <property type="project" value="UniProtKB-KW"/>
</dbReference>
<dbReference type="GO" id="GO:0004357">
    <property type="term" value="F:glutamate-cysteine ligase activity"/>
    <property type="evidence" value="ECO:0007669"/>
    <property type="project" value="UniProtKB-EC"/>
</dbReference>
<dbReference type="GO" id="GO:0042398">
    <property type="term" value="P:modified amino acid biosynthetic process"/>
    <property type="evidence" value="ECO:0007669"/>
    <property type="project" value="InterPro"/>
</dbReference>
<dbReference type="FunFam" id="3.30.590.20:FF:000002">
    <property type="entry name" value="Putative glutamate--cysteine ligase 2"/>
    <property type="match status" value="1"/>
</dbReference>
<dbReference type="Gene3D" id="3.30.590.20">
    <property type="match status" value="1"/>
</dbReference>
<dbReference type="HAMAP" id="MF_01609">
    <property type="entry name" value="Glu_cys_ligase_2"/>
    <property type="match status" value="1"/>
</dbReference>
<dbReference type="InterPro" id="IPR050141">
    <property type="entry name" value="GCL_type2/YbdK_subfam"/>
</dbReference>
<dbReference type="InterPro" id="IPR006336">
    <property type="entry name" value="GCS2"/>
</dbReference>
<dbReference type="InterPro" id="IPR014746">
    <property type="entry name" value="Gln_synth/guanido_kin_cat_dom"/>
</dbReference>
<dbReference type="InterPro" id="IPR011793">
    <property type="entry name" value="YbdK"/>
</dbReference>
<dbReference type="NCBIfam" id="TIGR02050">
    <property type="entry name" value="gshA_cyan_rel"/>
    <property type="match status" value="1"/>
</dbReference>
<dbReference type="NCBIfam" id="NF010040">
    <property type="entry name" value="PRK13516.1"/>
    <property type="match status" value="1"/>
</dbReference>
<dbReference type="PANTHER" id="PTHR36510">
    <property type="entry name" value="GLUTAMATE--CYSTEINE LIGASE 2-RELATED"/>
    <property type="match status" value="1"/>
</dbReference>
<dbReference type="PANTHER" id="PTHR36510:SF1">
    <property type="entry name" value="GLUTAMATE--CYSTEINE LIGASE 2-RELATED"/>
    <property type="match status" value="1"/>
</dbReference>
<dbReference type="Pfam" id="PF04107">
    <property type="entry name" value="GCS2"/>
    <property type="match status" value="1"/>
</dbReference>
<dbReference type="SUPFAM" id="SSF55931">
    <property type="entry name" value="Glutamine synthetase/guanido kinase"/>
    <property type="match status" value="1"/>
</dbReference>
<protein>
    <recommendedName>
        <fullName evidence="1">Putative glutamate--cysteine ligase 2</fullName>
        <ecNumber evidence="1">6.3.2.2</ecNumber>
    </recommendedName>
    <alternativeName>
        <fullName evidence="1">Gamma-glutamylcysteine synthetase 2</fullName>
        <shortName evidence="1">GCS 2</shortName>
        <shortName evidence="1">Gamma-GCS 2</shortName>
    </alternativeName>
</protein>